<evidence type="ECO:0000255" key="1"/>
<evidence type="ECO:0000305" key="2"/>
<name>SRA24_CAEEL</name>
<dbReference type="EMBL" id="Z81587">
    <property type="protein sequence ID" value="CAB04702.2"/>
    <property type="molecule type" value="Genomic_DNA"/>
</dbReference>
<dbReference type="PIR" id="T24616">
    <property type="entry name" value="T24616"/>
</dbReference>
<dbReference type="RefSeq" id="NP_493220.2">
    <property type="nucleotide sequence ID" value="NM_060819.2"/>
</dbReference>
<dbReference type="FunCoup" id="O62368">
    <property type="interactions" value="9"/>
</dbReference>
<dbReference type="PaxDb" id="6239-T06G6.2"/>
<dbReference type="EnsemblMetazoa" id="T06G6.2.1">
    <property type="protein sequence ID" value="T06G6.2.1"/>
    <property type="gene ID" value="WBGene00005050"/>
</dbReference>
<dbReference type="GeneID" id="188195"/>
<dbReference type="KEGG" id="cel:CELE_T06G6.2"/>
<dbReference type="UCSC" id="T06G6.2">
    <property type="organism name" value="c. elegans"/>
</dbReference>
<dbReference type="AGR" id="WB:WBGene00005050"/>
<dbReference type="CTD" id="188195"/>
<dbReference type="WormBase" id="T06G6.2">
    <property type="protein sequence ID" value="CE33445"/>
    <property type="gene ID" value="WBGene00005050"/>
    <property type="gene designation" value="sra-24"/>
</dbReference>
<dbReference type="eggNOG" id="ENOG502THAY">
    <property type="taxonomic scope" value="Eukaryota"/>
</dbReference>
<dbReference type="GeneTree" id="ENSGT00970000195862"/>
<dbReference type="HOGENOM" id="CLU_070413_0_0_1"/>
<dbReference type="InParanoid" id="O62368"/>
<dbReference type="OrthoDB" id="5855692at2759"/>
<dbReference type="PhylomeDB" id="O62368"/>
<dbReference type="PRO" id="PR:O62368"/>
<dbReference type="Proteomes" id="UP000001940">
    <property type="component" value="Chromosome I"/>
</dbReference>
<dbReference type="GO" id="GO:0016020">
    <property type="term" value="C:membrane"/>
    <property type="evidence" value="ECO:0007669"/>
    <property type="project" value="UniProtKB-SubCell"/>
</dbReference>
<dbReference type="GO" id="GO:0004930">
    <property type="term" value="F:G protein-coupled receptor activity"/>
    <property type="evidence" value="ECO:0007669"/>
    <property type="project" value="InterPro"/>
</dbReference>
<dbReference type="GO" id="GO:0007606">
    <property type="term" value="P:sensory perception of chemical stimulus"/>
    <property type="evidence" value="ECO:0007669"/>
    <property type="project" value="InterPro"/>
</dbReference>
<dbReference type="Gene3D" id="1.20.1070.10">
    <property type="entry name" value="Rhodopsin 7-helix transmembrane proteins"/>
    <property type="match status" value="1"/>
</dbReference>
<dbReference type="InterPro" id="IPR000344">
    <property type="entry name" value="7TM_GPCR_serpentine_rcpt_Sra"/>
</dbReference>
<dbReference type="PANTHER" id="PTHR31582:SF2">
    <property type="entry name" value="G-PROTEIN COUPLED RECEPTORS FAMILY 1 PROFILE DOMAIN-CONTAINING PROTEIN-RELATED"/>
    <property type="match status" value="1"/>
</dbReference>
<dbReference type="PANTHER" id="PTHR31582">
    <property type="entry name" value="SERPENTINE RECEPTOR, CLASS A (ALPHA)-RELATED-RELATED"/>
    <property type="match status" value="1"/>
</dbReference>
<dbReference type="Pfam" id="PF02117">
    <property type="entry name" value="7TM_GPCR_Sra"/>
    <property type="match status" value="1"/>
</dbReference>
<dbReference type="PRINTS" id="PR00697">
    <property type="entry name" value="TMPROTEINSRA"/>
</dbReference>
<comment type="subcellular location">
    <subcellularLocation>
        <location evidence="2">Membrane</location>
        <topology evidence="2">Multi-pass membrane protein</topology>
    </subcellularLocation>
</comment>
<comment type="similarity">
    <text evidence="2">Belongs to the nematode receptor-like protein sra family.</text>
</comment>
<accession>O62368</accession>
<proteinExistence type="inferred from homology"/>
<reference key="1">
    <citation type="journal article" date="1998" name="Science">
        <title>Genome sequence of the nematode C. elegans: a platform for investigating biology.</title>
        <authorList>
            <consortium name="The C. elegans sequencing consortium"/>
        </authorList>
    </citation>
    <scope>NUCLEOTIDE SEQUENCE [LARGE SCALE GENOMIC DNA]</scope>
    <source>
        <strain>Bristol N2</strain>
    </source>
</reference>
<organism>
    <name type="scientific">Caenorhabditis elegans</name>
    <dbReference type="NCBI Taxonomy" id="6239"/>
    <lineage>
        <taxon>Eukaryota</taxon>
        <taxon>Metazoa</taxon>
        <taxon>Ecdysozoa</taxon>
        <taxon>Nematoda</taxon>
        <taxon>Chromadorea</taxon>
        <taxon>Rhabditida</taxon>
        <taxon>Rhabditina</taxon>
        <taxon>Rhabditomorpha</taxon>
        <taxon>Rhabditoidea</taxon>
        <taxon>Rhabditidae</taxon>
        <taxon>Peloderinae</taxon>
        <taxon>Caenorhabditis</taxon>
    </lineage>
</organism>
<protein>
    <recommendedName>
        <fullName>Serpentine receptor class alpha-24</fullName>
        <shortName>Protein sra-24</shortName>
    </recommendedName>
</protein>
<keyword id="KW-0472">Membrane</keyword>
<keyword id="KW-1185">Reference proteome</keyword>
<keyword id="KW-0812">Transmembrane</keyword>
<keyword id="KW-1133">Transmembrane helix</keyword>
<gene>
    <name type="primary">sra-24</name>
    <name type="ORF">T06G6.2</name>
</gene>
<feature type="chain" id="PRO_0000104486" description="Serpentine receptor class alpha-24">
    <location>
        <begin position="1"/>
        <end position="339"/>
    </location>
</feature>
<feature type="transmembrane region" description="Helical" evidence="1">
    <location>
        <begin position="26"/>
        <end position="46"/>
    </location>
</feature>
<feature type="transmembrane region" description="Helical" evidence="1">
    <location>
        <begin position="65"/>
        <end position="82"/>
    </location>
</feature>
<feature type="transmembrane region" description="Helical" evidence="1">
    <location>
        <begin position="112"/>
        <end position="132"/>
    </location>
</feature>
<feature type="transmembrane region" description="Helical" evidence="1">
    <location>
        <begin position="151"/>
        <end position="171"/>
    </location>
</feature>
<feature type="transmembrane region" description="Helical" evidence="1">
    <location>
        <begin position="199"/>
        <end position="219"/>
    </location>
</feature>
<feature type="transmembrane region" description="Helical" evidence="1">
    <location>
        <begin position="248"/>
        <end position="268"/>
    </location>
</feature>
<feature type="transmembrane region" description="Helical" evidence="1">
    <location>
        <begin position="284"/>
        <end position="304"/>
    </location>
</feature>
<sequence>MNKTAEEIVESRRCASEGLTNALTSITVKMSSVLVVTVILLSYYFARLAIRTLWKNNIFSNSTRLILLVCLLNSIIHQTTMLEIRIRQIYRSIVFASEPCRLPFHFTECEVELFVYYLTTYFSTYSVFSLAFDRLISCYTPKYYLSHQYYVSIFLLFIQLIFTLGTYYVGLYGVPPLGYEPFCNYAPKLATNFVKINDFRTLIMGICIIVTVFVYYLSVKSEKQIQQTSYSPGERYIAYENVAASQSVCILIVLQFACILISSLGVNYLRIFKSTLSDEEYNKLAPFFVGVTYANLCLPLVIHCKTKLTIRNRKLRIGVMTSMYGDVGEHINRLKKSWE</sequence>